<dbReference type="EC" id="2.3.2.27"/>
<dbReference type="EMBL" id="U76248">
    <property type="protein sequence ID" value="AAC51908.1"/>
    <property type="molecule type" value="mRNA"/>
</dbReference>
<dbReference type="EMBL" id="Y15268">
    <property type="protein sequence ID" value="CAA75557.1"/>
    <property type="molecule type" value="mRNA"/>
</dbReference>
<dbReference type="EMBL" id="BC013082">
    <property type="protein sequence ID" value="AAH13082.1"/>
    <property type="molecule type" value="mRNA"/>
</dbReference>
<dbReference type="CCDS" id="CCDS3152.1"/>
<dbReference type="RefSeq" id="NP_005058.3">
    <property type="nucleotide sequence ID" value="NM_005067.5"/>
</dbReference>
<dbReference type="PDB" id="5H9M">
    <property type="method" value="X-ray"/>
    <property type="resolution" value="1.76 A"/>
    <property type="chains" value="A/B=131-321"/>
</dbReference>
<dbReference type="PDBsum" id="5H9M"/>
<dbReference type="SMR" id="O43255"/>
<dbReference type="BioGRID" id="112373">
    <property type="interactions" value="98"/>
</dbReference>
<dbReference type="CORUM" id="O43255"/>
<dbReference type="DIP" id="DIP-41874N"/>
<dbReference type="FunCoup" id="O43255">
    <property type="interactions" value="2964"/>
</dbReference>
<dbReference type="IntAct" id="O43255">
    <property type="interactions" value="26"/>
</dbReference>
<dbReference type="MINT" id="O43255"/>
<dbReference type="STRING" id="9606.ENSP00000322457"/>
<dbReference type="TCDB" id="8.A.133.1.2">
    <property type="family name" value="the siah1 e3 ubiquitin-protein ligase (siah1) family"/>
</dbReference>
<dbReference type="iPTMnet" id="O43255"/>
<dbReference type="PhosphoSitePlus" id="O43255"/>
<dbReference type="BioMuta" id="SIAH2"/>
<dbReference type="jPOST" id="O43255"/>
<dbReference type="MassIVE" id="O43255"/>
<dbReference type="PaxDb" id="9606-ENSP00000322457"/>
<dbReference type="PeptideAtlas" id="O43255"/>
<dbReference type="ProteomicsDB" id="48838"/>
<dbReference type="Antibodypedia" id="33601">
    <property type="antibodies" value="237 antibodies from 29 providers"/>
</dbReference>
<dbReference type="DNASU" id="6478"/>
<dbReference type="Ensembl" id="ENST00000312960.4">
    <property type="protein sequence ID" value="ENSP00000322457.3"/>
    <property type="gene ID" value="ENSG00000181788.4"/>
</dbReference>
<dbReference type="GeneID" id="6478"/>
<dbReference type="KEGG" id="hsa:6478"/>
<dbReference type="MANE-Select" id="ENST00000312960.4">
    <property type="protein sequence ID" value="ENSP00000322457.3"/>
    <property type="RefSeq nucleotide sequence ID" value="NM_005067.7"/>
    <property type="RefSeq protein sequence ID" value="NP_005058.3"/>
</dbReference>
<dbReference type="UCSC" id="uc003eyi.4">
    <property type="organism name" value="human"/>
</dbReference>
<dbReference type="AGR" id="HGNC:10858"/>
<dbReference type="CTD" id="6478"/>
<dbReference type="DisGeNET" id="6478"/>
<dbReference type="GeneCards" id="SIAH2"/>
<dbReference type="HGNC" id="HGNC:10858">
    <property type="gene designation" value="SIAH2"/>
</dbReference>
<dbReference type="HPA" id="ENSG00000181788">
    <property type="expression patterns" value="Low tissue specificity"/>
</dbReference>
<dbReference type="MIM" id="602213">
    <property type="type" value="gene"/>
</dbReference>
<dbReference type="neXtProt" id="NX_O43255"/>
<dbReference type="OpenTargets" id="ENSG00000181788"/>
<dbReference type="PharmGKB" id="PA35760"/>
<dbReference type="VEuPathDB" id="HostDB:ENSG00000181788"/>
<dbReference type="eggNOG" id="KOG3002">
    <property type="taxonomic scope" value="Eukaryota"/>
</dbReference>
<dbReference type="GeneTree" id="ENSGT00940000159812"/>
<dbReference type="HOGENOM" id="CLU_028215_0_0_1"/>
<dbReference type="InParanoid" id="O43255"/>
<dbReference type="OMA" id="AGHLVCK"/>
<dbReference type="OrthoDB" id="941555at2759"/>
<dbReference type="PAN-GO" id="O43255">
    <property type="GO annotations" value="4 GO annotations based on evolutionary models"/>
</dbReference>
<dbReference type="PhylomeDB" id="O43255"/>
<dbReference type="TreeFam" id="TF312976"/>
<dbReference type="PathwayCommons" id="O43255"/>
<dbReference type="Reactome" id="R-HSA-373752">
    <property type="pathway name" value="Netrin-1 signaling"/>
</dbReference>
<dbReference type="Reactome" id="R-HSA-5689880">
    <property type="pathway name" value="Ub-specific processing proteases"/>
</dbReference>
<dbReference type="Reactome" id="R-HSA-977225">
    <property type="pathway name" value="Amyloid fiber formation"/>
</dbReference>
<dbReference type="Reactome" id="R-HSA-983168">
    <property type="pathway name" value="Antigen processing: Ubiquitination &amp; Proteasome degradation"/>
</dbReference>
<dbReference type="SignaLink" id="O43255"/>
<dbReference type="SIGNOR" id="O43255"/>
<dbReference type="UniPathway" id="UPA00143"/>
<dbReference type="BioGRID-ORCS" id="6478">
    <property type="hits" value="13 hits in 1202 CRISPR screens"/>
</dbReference>
<dbReference type="ChiTaRS" id="SIAH2">
    <property type="organism name" value="human"/>
</dbReference>
<dbReference type="GeneWiki" id="SIAH2"/>
<dbReference type="GenomeRNAi" id="6478"/>
<dbReference type="Pharos" id="O43255">
    <property type="development level" value="Tbio"/>
</dbReference>
<dbReference type="PRO" id="PR:O43255"/>
<dbReference type="Proteomes" id="UP000005640">
    <property type="component" value="Chromosome 3"/>
</dbReference>
<dbReference type="RNAct" id="O43255">
    <property type="molecule type" value="protein"/>
</dbReference>
<dbReference type="Bgee" id="ENSG00000181788">
    <property type="expression patterns" value="Expressed in adrenal tissue and 186 other cell types or tissues"/>
</dbReference>
<dbReference type="ExpressionAtlas" id="O43255">
    <property type="expression patterns" value="baseline and differential"/>
</dbReference>
<dbReference type="GO" id="GO:0005737">
    <property type="term" value="C:cytoplasm"/>
    <property type="evidence" value="ECO:0000318"/>
    <property type="project" value="GO_Central"/>
</dbReference>
<dbReference type="GO" id="GO:0005829">
    <property type="term" value="C:cytosol"/>
    <property type="evidence" value="ECO:0000314"/>
    <property type="project" value="UniProtKB"/>
</dbReference>
<dbReference type="GO" id="GO:0005769">
    <property type="term" value="C:early endosome"/>
    <property type="evidence" value="ECO:0007669"/>
    <property type="project" value="Ensembl"/>
</dbReference>
<dbReference type="GO" id="GO:0043231">
    <property type="term" value="C:intracellular membrane-bounded organelle"/>
    <property type="evidence" value="ECO:0000314"/>
    <property type="project" value="HPA"/>
</dbReference>
<dbReference type="GO" id="GO:0043025">
    <property type="term" value="C:neuronal cell body"/>
    <property type="evidence" value="ECO:0007669"/>
    <property type="project" value="Ensembl"/>
</dbReference>
<dbReference type="GO" id="GO:0005654">
    <property type="term" value="C:nucleoplasm"/>
    <property type="evidence" value="ECO:0000314"/>
    <property type="project" value="HPA"/>
</dbReference>
<dbReference type="GO" id="GO:0003714">
    <property type="term" value="F:transcription corepressor activity"/>
    <property type="evidence" value="ECO:0000304"/>
    <property type="project" value="ProtInc"/>
</dbReference>
<dbReference type="GO" id="GO:0031624">
    <property type="term" value="F:ubiquitin conjugating enzyme binding"/>
    <property type="evidence" value="ECO:0000318"/>
    <property type="project" value="GO_Central"/>
</dbReference>
<dbReference type="GO" id="GO:0061630">
    <property type="term" value="F:ubiquitin protein ligase activity"/>
    <property type="evidence" value="ECO:0000250"/>
    <property type="project" value="UniProtKB"/>
</dbReference>
<dbReference type="GO" id="GO:0004842">
    <property type="term" value="F:ubiquitin-protein transferase activity"/>
    <property type="evidence" value="ECO:0000250"/>
    <property type="project" value="UniProtKB"/>
</dbReference>
<dbReference type="GO" id="GO:0008270">
    <property type="term" value="F:zinc ion binding"/>
    <property type="evidence" value="ECO:0007669"/>
    <property type="project" value="UniProtKB-KW"/>
</dbReference>
<dbReference type="GO" id="GO:1990000">
    <property type="term" value="P:amyloid fibril formation"/>
    <property type="evidence" value="ECO:0000304"/>
    <property type="project" value="Reactome"/>
</dbReference>
<dbReference type="GO" id="GO:0006915">
    <property type="term" value="P:apoptotic process"/>
    <property type="evidence" value="ECO:0007669"/>
    <property type="project" value="UniProtKB-KW"/>
</dbReference>
<dbReference type="GO" id="GO:0060070">
    <property type="term" value="P:canonical Wnt signaling pathway"/>
    <property type="evidence" value="ECO:0000315"/>
    <property type="project" value="UniProtKB"/>
</dbReference>
<dbReference type="GO" id="GO:0043066">
    <property type="term" value="P:negative regulation of apoptotic process"/>
    <property type="evidence" value="ECO:0000315"/>
    <property type="project" value="UniProtKB"/>
</dbReference>
<dbReference type="GO" id="GO:0090090">
    <property type="term" value="P:negative regulation of canonical Wnt signaling pathway"/>
    <property type="evidence" value="ECO:0000316"/>
    <property type="project" value="MGI"/>
</dbReference>
<dbReference type="GO" id="GO:2001237">
    <property type="term" value="P:negative regulation of extrinsic apoptotic signaling pathway"/>
    <property type="evidence" value="ECO:0000315"/>
    <property type="project" value="UniProtKB"/>
</dbReference>
<dbReference type="GO" id="GO:0043161">
    <property type="term" value="P:proteasome-mediated ubiquitin-dependent protein catabolic process"/>
    <property type="evidence" value="ECO:0000318"/>
    <property type="project" value="GO_Central"/>
</dbReference>
<dbReference type="GO" id="GO:0016567">
    <property type="term" value="P:protein ubiquitination"/>
    <property type="evidence" value="ECO:0007669"/>
    <property type="project" value="UniProtKB-UniPathway"/>
</dbReference>
<dbReference type="GO" id="GO:0042752">
    <property type="term" value="P:regulation of circadian rhythm"/>
    <property type="evidence" value="ECO:0000315"/>
    <property type="project" value="UniProtKB"/>
</dbReference>
<dbReference type="GO" id="GO:0031396">
    <property type="term" value="P:regulation of protein ubiquitination"/>
    <property type="evidence" value="ECO:0007669"/>
    <property type="project" value="Ensembl"/>
</dbReference>
<dbReference type="GO" id="GO:0048511">
    <property type="term" value="P:rhythmic process"/>
    <property type="evidence" value="ECO:0007669"/>
    <property type="project" value="UniProtKB-KW"/>
</dbReference>
<dbReference type="GO" id="GO:0007264">
    <property type="term" value="P:small GTPase-mediated signal transduction"/>
    <property type="evidence" value="ECO:0000304"/>
    <property type="project" value="ProtInc"/>
</dbReference>
<dbReference type="GO" id="GO:0006511">
    <property type="term" value="P:ubiquitin-dependent protein catabolic process"/>
    <property type="evidence" value="ECO:0000315"/>
    <property type="project" value="UniProtKB"/>
</dbReference>
<dbReference type="CDD" id="cd16752">
    <property type="entry name" value="RING-HC_SIAH2"/>
    <property type="match status" value="1"/>
</dbReference>
<dbReference type="CDD" id="cd03829">
    <property type="entry name" value="Sina"/>
    <property type="match status" value="1"/>
</dbReference>
<dbReference type="FunFam" id="2.60.210.10:FF:000002">
    <property type="entry name" value="E3 ubiquitin-protein ligase"/>
    <property type="match status" value="1"/>
</dbReference>
<dbReference type="FunFam" id="3.30.160.60:FF:000665">
    <property type="entry name" value="E3 ubiquitin-protein ligase"/>
    <property type="match status" value="1"/>
</dbReference>
<dbReference type="FunFam" id="3.30.40.10:FF:000050">
    <property type="entry name" value="E3 ubiquitin-protein ligase"/>
    <property type="match status" value="1"/>
</dbReference>
<dbReference type="FunFam" id="3.30.40.10:FF:000063">
    <property type="entry name" value="E3 ubiquitin-protein ligase"/>
    <property type="match status" value="1"/>
</dbReference>
<dbReference type="Gene3D" id="2.60.210.10">
    <property type="entry name" value="Apoptosis, Tumor Necrosis Factor Receptor Associated Protein 2, Chain A"/>
    <property type="match status" value="1"/>
</dbReference>
<dbReference type="Gene3D" id="3.30.40.10">
    <property type="entry name" value="Zinc/RING finger domain, C3HC4 (zinc finger)"/>
    <property type="match status" value="2"/>
</dbReference>
<dbReference type="InterPro" id="IPR018121">
    <property type="entry name" value="7-in-absentia-prot_TRAF-dom"/>
</dbReference>
<dbReference type="InterPro" id="IPR004162">
    <property type="entry name" value="SINA-like_animal"/>
</dbReference>
<dbReference type="InterPro" id="IPR049548">
    <property type="entry name" value="Sina-like_RING"/>
</dbReference>
<dbReference type="InterPro" id="IPR008974">
    <property type="entry name" value="TRAF-like"/>
</dbReference>
<dbReference type="InterPro" id="IPR001841">
    <property type="entry name" value="Znf_RING"/>
</dbReference>
<dbReference type="InterPro" id="IPR013083">
    <property type="entry name" value="Znf_RING/FYVE/PHD"/>
</dbReference>
<dbReference type="InterPro" id="IPR013010">
    <property type="entry name" value="Znf_SIAH"/>
</dbReference>
<dbReference type="PANTHER" id="PTHR45877">
    <property type="entry name" value="E3 UBIQUITIN-PROTEIN LIGASE SIAH2"/>
    <property type="match status" value="1"/>
</dbReference>
<dbReference type="PANTHER" id="PTHR45877:SF4">
    <property type="entry name" value="E3 UBIQUITIN-PROTEIN LIGASE SIAH2"/>
    <property type="match status" value="1"/>
</dbReference>
<dbReference type="Pfam" id="PF21362">
    <property type="entry name" value="Sina_RING"/>
    <property type="match status" value="1"/>
</dbReference>
<dbReference type="Pfam" id="PF03145">
    <property type="entry name" value="Sina_TRAF"/>
    <property type="match status" value="1"/>
</dbReference>
<dbReference type="Pfam" id="PF21361">
    <property type="entry name" value="Sina_ZnF"/>
    <property type="match status" value="1"/>
</dbReference>
<dbReference type="SUPFAM" id="SSF57850">
    <property type="entry name" value="RING/U-box"/>
    <property type="match status" value="1"/>
</dbReference>
<dbReference type="SUPFAM" id="SSF49599">
    <property type="entry name" value="TRAF domain-like"/>
    <property type="match status" value="1"/>
</dbReference>
<dbReference type="PROSITE" id="PS50089">
    <property type="entry name" value="ZF_RING_2"/>
    <property type="match status" value="1"/>
</dbReference>
<dbReference type="PROSITE" id="PS51081">
    <property type="entry name" value="ZF_SIAH"/>
    <property type="match status" value="1"/>
</dbReference>
<name>SIAH2_HUMAN</name>
<accession>O43255</accession>
<accession>O43270</accession>
<comment type="function">
    <text evidence="2 8 9 12 13 14 15 16">E3 ubiquitin-protein ligase that mediates ubiquitination and subsequent proteasomal degradation of target proteins (PubMed:11483518, PubMed:19224863, PubMed:9334332). E3 ubiquitin ligases accept ubiquitin from an E2 ubiquitin-conjugating enzyme in the form of a thioester and then directly transfers the ubiquitin to targeted substrates (PubMed:11483518, PubMed:19224863, PubMed:9334332). Mediates E3 ubiquitin ligase activity either through direct binding to substrates or by functioning as the essential RING domain subunit of larger E3 complexes (PubMed:11483518, PubMed:19224863, PubMed:9334332). Triggers the ubiquitin-mediated degradation of many substrates, including proteins involved in transcription regulation (GPS2, POU2AF1, PML, NCOR1), a cell surface receptor (DCC), an antiapoptotic protein (BAG1), and a protein involved in synaptic vesicle function in neurons (SYP) (PubMed:11483518, PubMed:19224863, PubMed:9334332). Mediates ubiquitination and proteasomal degradation of DYRK2 in response to hypoxia (PubMed:22878263). It is thereby involved in apoptosis, tumor suppression, cell cycle, transcription and signaling processes (PubMed:11483518, PubMed:19224863, PubMed:22878263, PubMed:9334332). Has some overlapping function with SIAH1 (PubMed:11483518, PubMed:19224863, PubMed:9334332). Triggers the ubiquitin-mediated degradation of TRAF2, whereas SIAH1 does not (PubMed:12411493). Promotes monoubiquitination of SNCA (PubMed:19224863). Regulates cellular clock function via ubiquitination of the circadian transcriptional repressors NR1D1 and NR1D2 leading to their proteasomal degradation (PubMed:26392558). Plays an important role in mediating the rhythmic degradation/clearance of NR1D1 and NR1D2 contributing to their circadian profile of protein abundance (PubMed:26392558). Mediates ubiquitination and degradation of EGLN2 and EGLN3 in response to the unfolded protein response (UPR), leading to their degradation and subsequent stabilization of ATF4 (By similarity). Also part of the Wnt signaling pathway in which it mediates the Wnt-induced ubiquitin-mediated proteasomal degradation of AXIN1.</text>
</comment>
<comment type="catalytic activity">
    <reaction>
        <text>S-ubiquitinyl-[E2 ubiquitin-conjugating enzyme]-L-cysteine + [acceptor protein]-L-lysine = [E2 ubiquitin-conjugating enzyme]-L-cysteine + N(6)-ubiquitinyl-[acceptor protein]-L-lysine.</text>
        <dbReference type="EC" id="2.3.2.27"/>
    </reaction>
</comment>
<comment type="activity regulation">
    <text evidence="12">Inhibited by interaction with SNCAIP (isoform 2, but not isoform 1). May be inhibited by interaction with PEG10.</text>
</comment>
<comment type="pathway">
    <text>Protein modification; protein ubiquitination.</text>
</comment>
<comment type="subunit">
    <text evidence="2 6 7 10 11 12 13 14 15 16">Homodimer. Interacts with UBE2E2. Interacts with PEG3 (By similarity). Interacts with VAV1, without mediating its ubiquitin-mediated degradation. Interacts with CACYBP/SIP. Probable component of some large E3 complex possibly composed of UBE2D1, SIAH2, CACYBP/SIP, SKP1, APC and TBL1X. Interacts with PEG10, which may inhibit its activity. Interacts with EGLN2 and SNCAIP. Interacts with DYRK2. Interacts with NR1D1 and NR1D2 (PubMed:26392558). Interacts with DCC (PubMed:9334332). Interacts with AXIN1 (PubMed:28546513).</text>
</comment>
<comment type="interaction">
    <interactant intactId="EBI-948141">
        <id>O43255</id>
    </interactant>
    <interactant intactId="EBI-444209">
        <id>O95835</id>
        <label>LATS1</label>
    </interactant>
    <organismsDiffer>false</organismsDiffer>
    <experiments>2</experiments>
</comment>
<comment type="interaction">
    <interactant intactId="EBI-948141">
        <id>O43255</id>
    </interactant>
    <interactant intactId="EBI-3506895">
        <id>Q9NRM7</id>
        <label>LATS2</label>
    </interactant>
    <organismsDiffer>false</organismsDiffer>
    <experiments>6</experiments>
</comment>
<comment type="interaction">
    <interactant intactId="EBI-948141">
        <id>O43255</id>
    </interactant>
    <interactant intactId="EBI-2624570">
        <id>P35372</id>
        <label>OPRM1</label>
    </interactant>
    <organismsDiffer>false</organismsDiffer>
    <experiments>3</experiments>
</comment>
<comment type="interaction">
    <interactant intactId="EBI-948141">
        <id>O43255</id>
    </interactant>
    <interactant intactId="EBI-311339">
        <id>Q7Z6J0</id>
        <label>SH3RF1</label>
    </interactant>
    <organismsDiffer>false</organismsDiffer>
    <experiments>3</experiments>
</comment>
<comment type="subcellular location">
    <subcellularLocation>
        <location evidence="12 13">Cytoplasm</location>
    </subcellularLocation>
    <subcellularLocation>
        <location evidence="13">Nucleus</location>
    </subcellularLocation>
    <text evidence="13">Predominantly cytoplasmic. Partially nuclear.</text>
</comment>
<comment type="tissue specificity">
    <text evidence="17">Widely expressed at low level.</text>
</comment>
<comment type="domain">
    <text>The RING-type zinc finger domain is essential for ubiquitin ligase activity.</text>
</comment>
<comment type="domain">
    <text evidence="1">The SBD domain (substrate-binding domain) mediates the homodimerization and the interaction with substrate proteins. It is related to the TRAF family.</text>
</comment>
<comment type="PTM">
    <text evidence="2 13">Phosphorylated at Ser-28 by MAPK14, which mediates the degradation by the proteasome of EGLN3 (By similarity). Phosphorylated at Ser-28 by DYRK2; this increases the ubiquitin ligase activity and promotes degradation of EGLN3.</text>
</comment>
<comment type="similarity">
    <text evidence="18">Belongs to the SINA (Seven in absentia) family.</text>
</comment>
<comment type="online information" name="Atlas of Genetics and Cytogenetics in Oncology and Haematology">
    <link uri="https://atlasgeneticsoncology.org/gene/46199/SIAH2"/>
</comment>
<keyword id="KW-0002">3D-structure</keyword>
<keyword id="KW-0053">Apoptosis</keyword>
<keyword id="KW-0090">Biological rhythms</keyword>
<keyword id="KW-0131">Cell cycle</keyword>
<keyword id="KW-0963">Cytoplasm</keyword>
<keyword id="KW-0479">Metal-binding</keyword>
<keyword id="KW-0539">Nucleus</keyword>
<keyword id="KW-0597">Phosphoprotein</keyword>
<keyword id="KW-1267">Proteomics identification</keyword>
<keyword id="KW-1185">Reference proteome</keyword>
<keyword id="KW-0808">Transferase</keyword>
<keyword id="KW-0833">Ubl conjugation pathway</keyword>
<keyword id="KW-0862">Zinc</keyword>
<keyword id="KW-0863">Zinc-finger</keyword>
<organism>
    <name type="scientific">Homo sapiens</name>
    <name type="common">Human</name>
    <dbReference type="NCBI Taxonomy" id="9606"/>
    <lineage>
        <taxon>Eukaryota</taxon>
        <taxon>Metazoa</taxon>
        <taxon>Chordata</taxon>
        <taxon>Craniata</taxon>
        <taxon>Vertebrata</taxon>
        <taxon>Euteleostomi</taxon>
        <taxon>Mammalia</taxon>
        <taxon>Eutheria</taxon>
        <taxon>Euarchontoglires</taxon>
        <taxon>Primates</taxon>
        <taxon>Haplorrhini</taxon>
        <taxon>Catarrhini</taxon>
        <taxon>Hominidae</taxon>
        <taxon>Homo</taxon>
    </lineage>
</organism>
<feature type="chain" id="PRO_0000056168" description="E3 ubiquitin-protein ligase SIAH2">
    <location>
        <begin position="1"/>
        <end position="324"/>
    </location>
</feature>
<feature type="zinc finger region" description="RING-type" evidence="3">
    <location>
        <begin position="80"/>
        <end position="115"/>
    </location>
</feature>
<feature type="zinc finger region" description="SIAH-type" evidence="4">
    <location>
        <begin position="133"/>
        <end position="193"/>
    </location>
</feature>
<feature type="region of interest" description="Disordered" evidence="5">
    <location>
        <begin position="1"/>
        <end position="42"/>
    </location>
</feature>
<feature type="region of interest" description="SBD" evidence="1">
    <location>
        <begin position="130"/>
        <end position="322"/>
    </location>
</feature>
<feature type="compositionally biased region" description="Polar residues" evidence="5">
    <location>
        <begin position="1"/>
        <end position="15"/>
    </location>
</feature>
<feature type="compositionally biased region" description="Pro residues" evidence="5">
    <location>
        <begin position="17"/>
        <end position="32"/>
    </location>
</feature>
<feature type="compositionally biased region" description="Low complexity" evidence="5">
    <location>
        <begin position="33"/>
        <end position="42"/>
    </location>
</feature>
<feature type="binding site" evidence="1">
    <location>
        <position position="138"/>
    </location>
    <ligand>
        <name>Zn(2+)</name>
        <dbReference type="ChEBI" id="CHEBI:29105"/>
        <label>1</label>
    </ligand>
</feature>
<feature type="binding site" evidence="1">
    <location>
        <position position="145"/>
    </location>
    <ligand>
        <name>Zn(2+)</name>
        <dbReference type="ChEBI" id="CHEBI:29105"/>
        <label>1</label>
    </ligand>
</feature>
<feature type="binding site" evidence="1">
    <location>
        <position position="157"/>
    </location>
    <ligand>
        <name>Zn(2+)</name>
        <dbReference type="ChEBI" id="CHEBI:29105"/>
        <label>1</label>
    </ligand>
</feature>
<feature type="binding site" evidence="1">
    <location>
        <position position="161"/>
    </location>
    <ligand>
        <name>Zn(2+)</name>
        <dbReference type="ChEBI" id="CHEBI:29105"/>
        <label>1</label>
    </ligand>
</feature>
<feature type="binding site" evidence="1">
    <location>
        <position position="168"/>
    </location>
    <ligand>
        <name>Zn(2+)</name>
        <dbReference type="ChEBI" id="CHEBI:29105"/>
        <label>2</label>
    </ligand>
</feature>
<feature type="binding site" evidence="1">
    <location>
        <position position="175"/>
    </location>
    <ligand>
        <name>Zn(2+)</name>
        <dbReference type="ChEBI" id="CHEBI:29105"/>
        <label>2</label>
    </ligand>
</feature>
<feature type="binding site" evidence="1">
    <location>
        <position position="187"/>
    </location>
    <ligand>
        <name>Zn(2+)</name>
        <dbReference type="ChEBI" id="CHEBI:29105"/>
        <label>2</label>
    </ligand>
</feature>
<feature type="binding site" evidence="1">
    <location>
        <position position="192"/>
    </location>
    <ligand>
        <name>Zn(2+)</name>
        <dbReference type="ChEBI" id="CHEBI:29105"/>
        <label>2</label>
    </ligand>
</feature>
<feature type="modified residue" description="Phosphoserine" evidence="19">
    <location>
        <position position="6"/>
    </location>
</feature>
<feature type="modified residue" description="Phosphoserine; by DYRK2" evidence="13">
    <location>
        <position position="16"/>
    </location>
</feature>
<feature type="modified residue" description="Phosphothreonine; by DYRK2" evidence="13">
    <location>
        <position position="26"/>
    </location>
</feature>
<feature type="modified residue" description="Phosphoserine; by DYRK2 and MAPK14" evidence="13">
    <location>
        <position position="28"/>
    </location>
</feature>
<feature type="modified residue" description="Phosphoserine; by DYRK2" evidence="13">
    <location>
        <position position="68"/>
    </location>
</feature>
<feature type="modified residue" description="Phosphothreonine; by DYRK2" evidence="13">
    <location>
        <position position="119"/>
    </location>
</feature>
<feature type="mutagenesis site" description="Strongly reduced phosphorylation by DYRK2; when associated with A-26; A-28; A-68 and A-119." evidence="13">
    <original>S</original>
    <variation>A</variation>
    <location>
        <position position="16"/>
    </location>
</feature>
<feature type="mutagenesis site" description="Strongly reduced phosphorylation by DYRK2; when associated with A-16; A-28; A-68 and A-119." evidence="13">
    <original>T</original>
    <variation>A</variation>
    <location>
        <position position="26"/>
    </location>
</feature>
<feature type="mutagenesis site" description="Strongly reduced phosphorylation by DYRK2; when associated with A-16; A-26; A-68 and A-119." evidence="13">
    <original>S</original>
    <variation>A</variation>
    <location>
        <position position="28"/>
    </location>
</feature>
<feature type="mutagenesis site" description="Strongly reduced phosphorylation by DYRK2; when associated with A-16; A-26; A-28 and A-119." evidence="13">
    <original>S</original>
    <variation>A</variation>
    <location>
        <position position="68"/>
    </location>
</feature>
<feature type="mutagenesis site" description="Strongly reduced phosphorylation by DYRK2; when associated with A-16; A-26; A-28 and A-68." evidence="13">
    <original>T</original>
    <variation>A</variation>
    <location>
        <position position="119"/>
    </location>
</feature>
<feature type="sequence conflict" description="In Ref. 1; AAC51908." evidence="18" ref="1">
    <original>G</original>
    <variation>E</variation>
    <location>
        <position position="200"/>
    </location>
</feature>
<feature type="strand" evidence="20">
    <location>
        <begin position="135"/>
        <end position="137"/>
    </location>
</feature>
<feature type="helix" evidence="20">
    <location>
        <begin position="141"/>
        <end position="143"/>
    </location>
</feature>
<feature type="strand" evidence="20">
    <location>
        <begin position="148"/>
        <end position="150"/>
    </location>
</feature>
<feature type="turn" evidence="20">
    <location>
        <begin position="151"/>
        <end position="153"/>
    </location>
</feature>
<feature type="helix" evidence="20">
    <location>
        <begin position="154"/>
        <end position="160"/>
    </location>
</feature>
<feature type="helix" evidence="20">
    <location>
        <begin position="181"/>
        <end position="183"/>
    </location>
</feature>
<feature type="helix" evidence="20">
    <location>
        <begin position="184"/>
        <end position="191"/>
    </location>
</feature>
<feature type="strand" evidence="20">
    <location>
        <begin position="196"/>
        <end position="207"/>
    </location>
</feature>
<feature type="strand" evidence="20">
    <location>
        <begin position="217"/>
        <end position="224"/>
    </location>
</feature>
<feature type="strand" evidence="20">
    <location>
        <begin position="227"/>
        <end position="239"/>
    </location>
</feature>
<feature type="strand" evidence="20">
    <location>
        <begin position="242"/>
        <end position="253"/>
    </location>
</feature>
<feature type="helix" evidence="20">
    <location>
        <begin position="255"/>
        <end position="258"/>
    </location>
</feature>
<feature type="strand" evidence="20">
    <location>
        <begin position="262"/>
        <end position="269"/>
    </location>
</feature>
<feature type="strand" evidence="20">
    <location>
        <begin position="272"/>
        <end position="278"/>
    </location>
</feature>
<feature type="helix" evidence="20">
    <location>
        <begin position="283"/>
        <end position="285"/>
    </location>
</feature>
<feature type="helix" evidence="20">
    <location>
        <begin position="288"/>
        <end position="292"/>
    </location>
</feature>
<feature type="strand" evidence="20">
    <location>
        <begin position="296"/>
        <end position="300"/>
    </location>
</feature>
<feature type="helix" evidence="20">
    <location>
        <begin position="301"/>
        <end position="307"/>
    </location>
</feature>
<feature type="strand" evidence="20">
    <location>
        <begin position="312"/>
        <end position="320"/>
    </location>
</feature>
<gene>
    <name type="primary">SIAH2</name>
</gene>
<sequence length="324" mass="34615">MSRPSSTGPSANKPCSKQPPPQPQHTPSPAAPPAAATISAAGPGSSAVPAAAAVISGPGGGGGAGPVSPQHHELTSLFECPVCFDYVLPPILQCQAGHLVCNQCRQKLSCCPTCRGALTPSIRNLAMEKVASAVLFPCKYATTGCSLTLHHTEKPEHEDICEYRPYSCPCPGASCKWQGSLEAVMSHLMHAHKSITTLQGEDIVFLATDINLPGAVDWVMMQSCFGHHFMLVLEKQEKYEGHQQFFAIVLLIGTRKQAENFAYRLELNGNRRRLTWEATPRSIHDGVAAAIMNSDCLVFDTAIAHLFADNGNLGINVTISTCCP</sequence>
<proteinExistence type="evidence at protein level"/>
<protein>
    <recommendedName>
        <fullName>E3 ubiquitin-protein ligase SIAH2</fullName>
        <ecNumber>2.3.2.27</ecNumber>
    </recommendedName>
    <alternativeName>
        <fullName evidence="18">RING-type E3 ubiquitin transferase SIAH2</fullName>
    </alternativeName>
    <alternativeName>
        <fullName>Seven in absentia homolog 2</fullName>
        <shortName>Siah-2</shortName>
        <shortName>hSiah2</shortName>
    </alternativeName>
</protein>
<evidence type="ECO:0000250" key="1">
    <source>
        <dbReference type="UniProtKB" id="P61092"/>
    </source>
</evidence>
<evidence type="ECO:0000250" key="2">
    <source>
        <dbReference type="UniProtKB" id="Q06986"/>
    </source>
</evidence>
<evidence type="ECO:0000255" key="3">
    <source>
        <dbReference type="PROSITE-ProRule" id="PRU00175"/>
    </source>
</evidence>
<evidence type="ECO:0000255" key="4">
    <source>
        <dbReference type="PROSITE-ProRule" id="PRU00455"/>
    </source>
</evidence>
<evidence type="ECO:0000256" key="5">
    <source>
        <dbReference type="SAM" id="MobiDB-lite"/>
    </source>
</evidence>
<evidence type="ECO:0000269" key="6">
    <source>
    </source>
</evidence>
<evidence type="ECO:0000269" key="7">
    <source>
    </source>
</evidence>
<evidence type="ECO:0000269" key="8">
    <source>
    </source>
</evidence>
<evidence type="ECO:0000269" key="9">
    <source>
    </source>
</evidence>
<evidence type="ECO:0000269" key="10">
    <source>
    </source>
</evidence>
<evidence type="ECO:0000269" key="11">
    <source>
    </source>
</evidence>
<evidence type="ECO:0000269" key="12">
    <source>
    </source>
</evidence>
<evidence type="ECO:0000269" key="13">
    <source>
    </source>
</evidence>
<evidence type="ECO:0000269" key="14">
    <source>
    </source>
</evidence>
<evidence type="ECO:0000269" key="15">
    <source>
    </source>
</evidence>
<evidence type="ECO:0000269" key="16">
    <source>
    </source>
</evidence>
<evidence type="ECO:0000269" key="17">
    <source>
    </source>
</evidence>
<evidence type="ECO:0000305" key="18"/>
<evidence type="ECO:0007744" key="19">
    <source>
    </source>
</evidence>
<evidence type="ECO:0007829" key="20">
    <source>
        <dbReference type="PDB" id="5H9M"/>
    </source>
</evidence>
<reference key="1">
    <citation type="journal article" date="1997" name="Genomics">
        <title>Characterization of human homologs of the Drosophila seven in absentia (sina) gene.</title>
        <authorList>
            <person name="Hu G."/>
            <person name="Chung Y.-L."/>
            <person name="Glover T."/>
            <person name="Valentine V."/>
            <person name="Look A.T."/>
            <person name="Fearon E.R."/>
        </authorList>
    </citation>
    <scope>NUCLEOTIDE SEQUENCE [MRNA]</scope>
    <scope>TISSUE SPECIFICITY</scope>
</reference>
<reference key="2">
    <citation type="journal article" date="1999" name="Mol. Cell. Biol.">
        <title>hSiah2 is a new Vav binding protein which inhibits Vav-mediated signaling pathways.</title>
        <authorList>
            <person name="Germani A."/>
            <person name="Romero F."/>
            <person name="Houlard M."/>
            <person name="Camonis J."/>
            <person name="Gisselbrecht S."/>
            <person name="Fischer S."/>
            <person name="Varin-Blank N."/>
        </authorList>
    </citation>
    <scope>NUCLEOTIDE SEQUENCE [MRNA]</scope>
    <scope>INTERACTION WITH VAV1</scope>
</reference>
<reference key="3">
    <citation type="journal article" date="2004" name="Genome Res.">
        <title>The status, quality, and expansion of the NIH full-length cDNA project: the Mammalian Gene Collection (MGC).</title>
        <authorList>
            <consortium name="The MGC Project Team"/>
        </authorList>
    </citation>
    <scope>NUCLEOTIDE SEQUENCE [LARGE SCALE MRNA]</scope>
    <source>
        <tissue>Brain</tissue>
    </source>
</reference>
<reference key="4">
    <citation type="journal article" date="1997" name="Genes Dev.">
        <title>Mammalian homologs of seven in absentia regulate DCC via the ubiquitin-proteasome pathway.</title>
        <authorList>
            <person name="Hu G."/>
            <person name="Zhang S."/>
            <person name="Vidal M."/>
            <person name="Baer J.L."/>
            <person name="Xu T."/>
            <person name="Fearon E.R."/>
        </authorList>
    </citation>
    <scope>FUNCTION IN DEGRADATION OF DCC</scope>
    <scope>INTERACTION WITH UBE2I AND DCC</scope>
</reference>
<reference key="5">
    <citation type="journal article" date="2001" name="EMBO J.">
        <title>Regulation of BOB.1/OBF.1 stability by SIAH.</title>
        <authorList>
            <person name="Boehm J."/>
            <person name="He Y."/>
            <person name="Greiner A."/>
            <person name="Staudt L."/>
            <person name="Wirth T."/>
        </authorList>
    </citation>
    <scope>FUNCTION IN DEGRADATION OF POU2AF1</scope>
</reference>
<reference key="6">
    <citation type="journal article" date="2001" name="Mol. Cell">
        <title>Siah-1, SIP, and Ebi collaborate in a novel pathway for beta-catenin degradation linked to p53 responses.</title>
        <authorList>
            <person name="Matsuzawa S."/>
            <person name="Reed J.C."/>
        </authorList>
    </citation>
    <scope>INTERACTION WITH CACYBP</scope>
</reference>
<reference key="7">
    <citation type="journal article" date="2002" name="EMBO J.">
        <title>Stress-induced decrease in TRAF2 stability is mediated by Siah2.</title>
        <authorList>
            <person name="Habelhah H."/>
            <person name="Frew I.J."/>
            <person name="Laine A."/>
            <person name="Janes P.W."/>
            <person name="Relaix F."/>
            <person name="Sassoon D."/>
            <person name="Bowtell D.D.L."/>
            <person name="Ronai Z."/>
        </authorList>
    </citation>
    <scope>FUNCTION IN DEGRADATION OF TRAF2</scope>
</reference>
<reference key="8">
    <citation type="journal article" date="2003" name="Cancer Res.">
        <title>Involvement of PEG10 in human hepatocellular carcinogenesis through interaction with SIAH1.</title>
        <authorList>
            <person name="Okabe H."/>
            <person name="Satoh S."/>
            <person name="Furukawa Y."/>
            <person name="Kato T."/>
            <person name="Hasegawa S."/>
            <person name="Nakajima Y."/>
            <person name="Yamaoka Y."/>
            <person name="Nakamura Y."/>
        </authorList>
    </citation>
    <scope>INTERACTION WITH PEG10</scope>
</reference>
<reference key="9">
    <citation type="journal article" date="2006" name="Biochem. J.">
        <title>Characterization of different isoforms of the HIF prolyl hydroxylase PHD1 generated by alternative initiation.</title>
        <authorList>
            <person name="Tian Y.M."/>
            <person name="Mole D.R."/>
            <person name="Ratcliffe P.J."/>
            <person name="Gleadle J.M."/>
        </authorList>
    </citation>
    <scope>INTERACTION WITH EGLN2</scope>
</reference>
<reference key="10">
    <citation type="journal article" date="2009" name="J. Biol. Chem.">
        <title>Synphilin-1A inhibits seven in absentia homolog (SIAH) and modulates alpha-synuclein monoubiquitylation and inclusion formation.</title>
        <authorList>
            <person name="Szargel R."/>
            <person name="Rott R."/>
            <person name="Eyal A."/>
            <person name="Haskin J."/>
            <person name="Shani V."/>
            <person name="Balan L."/>
            <person name="Wolosker H."/>
            <person name="Engelender S."/>
        </authorList>
    </citation>
    <scope>FUNCTION</scope>
    <scope>INTERACTION WITH SNCAIP</scope>
    <scope>SUBCELLULAR LOCATION</scope>
    <scope>ACTIVITY REGULATION</scope>
</reference>
<reference key="11">
    <citation type="journal article" date="2012" name="J. Mol. Cell Biol.">
        <title>Mutual regulation between SIAH2 and DYRK2 controls hypoxic and genotoxic signaling pathways.</title>
        <authorList>
            <person name="Perez M."/>
            <person name="Garcia-Limones C."/>
            <person name="Zapico I."/>
            <person name="Marina A."/>
            <person name="Schmitz M.L."/>
            <person name="Munoz E."/>
            <person name="Calzado M.A."/>
        </authorList>
    </citation>
    <scope>FUNCTION</scope>
    <scope>INTERACTION WITH DYRK2</scope>
    <scope>SUBCELLULAR LOCATION</scope>
    <scope>PHOSPHORYLATION AT SER-16; THR-26; SER-28; SER-68 AND THR-119</scope>
    <scope>MUTAGENESIS OF SER-16; THR-26; SER-28; SER-68 AND THR-119</scope>
    <scope>IDENTIFICATION BY MASS SPECTROMETRY</scope>
</reference>
<reference key="12">
    <citation type="journal article" date="2013" name="J. Proteome Res.">
        <title>Toward a comprehensive characterization of a human cancer cell phosphoproteome.</title>
        <authorList>
            <person name="Zhou H."/>
            <person name="Di Palma S."/>
            <person name="Preisinger C."/>
            <person name="Peng M."/>
            <person name="Polat A.N."/>
            <person name="Heck A.J."/>
            <person name="Mohammed S."/>
        </authorList>
    </citation>
    <scope>PHOSPHORYLATION [LARGE SCALE ANALYSIS] AT SER-6</scope>
    <scope>IDENTIFICATION BY MASS SPECTROMETRY [LARGE SCALE ANALYSIS]</scope>
    <source>
        <tissue>Erythroleukemia</tissue>
    </source>
</reference>
<reference key="13">
    <citation type="journal article" date="2015" name="Proc. Natl. Acad. Sci. U.S.A.">
        <title>Ubiquitin ligase Siah2 regulates RevErbalpha degradation and the mammalian circadian clock.</title>
        <authorList>
            <person name="DeBruyne J.P."/>
            <person name="Baggs J.E."/>
            <person name="Sato T.K."/>
            <person name="Hogenesch J.B."/>
        </authorList>
    </citation>
    <scope>FUNCTION</scope>
    <scope>INTERACTION WITH NR1D1 AND NR1D2</scope>
</reference>
<reference key="14">
    <citation type="journal article" date="2017" name="Genes Dev.">
        <title>The SIAH E3 ubiquitin ligases promote Wnt/beta-catenin signaling through mediating Wnt-induced Axin degradation.</title>
        <authorList>
            <person name="Ji L."/>
            <person name="Jiang B."/>
            <person name="Jiang X."/>
            <person name="Charlat O."/>
            <person name="Chen A."/>
            <person name="Mickanin C."/>
            <person name="Bauer A."/>
            <person name="Xu W."/>
            <person name="Yan X."/>
            <person name="Cong F."/>
        </authorList>
    </citation>
    <scope>FUNCTION</scope>
    <scope>INTERACTION WITH AXIN1</scope>
</reference>